<sequence length="154" mass="16756">MKDVVGSPGTWSGMSLRVSQCVFAGASVVAMASAYGFSNYTAFCYLIASMGLQLLWSFGLACLDIYSLQTKRDLHNPVLVSLFVVGDWVTAILSFAAASASAGVTILFERDVHFCRMYPQLSCGRYELSVILAFITWSFIATSAVSMFWLLASL</sequence>
<comment type="subunit">
    <text evidence="1">Homodimer and heterodimers.</text>
</comment>
<comment type="subcellular location">
    <subcellularLocation>
        <location evidence="1">Cell membrane</location>
        <topology evidence="1">Multi-pass membrane protein</topology>
    </subcellularLocation>
</comment>
<comment type="similarity">
    <text evidence="3">Belongs to the Casparian strip membrane proteins (CASP) family.</text>
</comment>
<gene>
    <name type="ORF">OsI_30532</name>
</gene>
<reference key="1">
    <citation type="journal article" date="2005" name="PLoS Biol.">
        <title>The genomes of Oryza sativa: a history of duplications.</title>
        <authorList>
            <person name="Yu J."/>
            <person name="Wang J."/>
            <person name="Lin W."/>
            <person name="Li S."/>
            <person name="Li H."/>
            <person name="Zhou J."/>
            <person name="Ni P."/>
            <person name="Dong W."/>
            <person name="Hu S."/>
            <person name="Zeng C."/>
            <person name="Zhang J."/>
            <person name="Zhang Y."/>
            <person name="Li R."/>
            <person name="Xu Z."/>
            <person name="Li S."/>
            <person name="Li X."/>
            <person name="Zheng H."/>
            <person name="Cong L."/>
            <person name="Lin L."/>
            <person name="Yin J."/>
            <person name="Geng J."/>
            <person name="Li G."/>
            <person name="Shi J."/>
            <person name="Liu J."/>
            <person name="Lv H."/>
            <person name="Li J."/>
            <person name="Wang J."/>
            <person name="Deng Y."/>
            <person name="Ran L."/>
            <person name="Shi X."/>
            <person name="Wang X."/>
            <person name="Wu Q."/>
            <person name="Li C."/>
            <person name="Ren X."/>
            <person name="Wang J."/>
            <person name="Wang X."/>
            <person name="Li D."/>
            <person name="Liu D."/>
            <person name="Zhang X."/>
            <person name="Ji Z."/>
            <person name="Zhao W."/>
            <person name="Sun Y."/>
            <person name="Zhang Z."/>
            <person name="Bao J."/>
            <person name="Han Y."/>
            <person name="Dong L."/>
            <person name="Ji J."/>
            <person name="Chen P."/>
            <person name="Wu S."/>
            <person name="Liu J."/>
            <person name="Xiao Y."/>
            <person name="Bu D."/>
            <person name="Tan J."/>
            <person name="Yang L."/>
            <person name="Ye C."/>
            <person name="Zhang J."/>
            <person name="Xu J."/>
            <person name="Zhou Y."/>
            <person name="Yu Y."/>
            <person name="Zhang B."/>
            <person name="Zhuang S."/>
            <person name="Wei H."/>
            <person name="Liu B."/>
            <person name="Lei M."/>
            <person name="Yu H."/>
            <person name="Li Y."/>
            <person name="Xu H."/>
            <person name="Wei S."/>
            <person name="He X."/>
            <person name="Fang L."/>
            <person name="Zhang Z."/>
            <person name="Zhang Y."/>
            <person name="Huang X."/>
            <person name="Su Z."/>
            <person name="Tong W."/>
            <person name="Li J."/>
            <person name="Tong Z."/>
            <person name="Li S."/>
            <person name="Ye J."/>
            <person name="Wang L."/>
            <person name="Fang L."/>
            <person name="Lei T."/>
            <person name="Chen C.-S."/>
            <person name="Chen H.-C."/>
            <person name="Xu Z."/>
            <person name="Li H."/>
            <person name="Huang H."/>
            <person name="Zhang F."/>
            <person name="Xu H."/>
            <person name="Li N."/>
            <person name="Zhao C."/>
            <person name="Li S."/>
            <person name="Dong L."/>
            <person name="Huang Y."/>
            <person name="Li L."/>
            <person name="Xi Y."/>
            <person name="Qi Q."/>
            <person name="Li W."/>
            <person name="Zhang B."/>
            <person name="Hu W."/>
            <person name="Zhang Y."/>
            <person name="Tian X."/>
            <person name="Jiao Y."/>
            <person name="Liang X."/>
            <person name="Jin J."/>
            <person name="Gao L."/>
            <person name="Zheng W."/>
            <person name="Hao B."/>
            <person name="Liu S.-M."/>
            <person name="Wang W."/>
            <person name="Yuan L."/>
            <person name="Cao M."/>
            <person name="McDermott J."/>
            <person name="Samudrala R."/>
            <person name="Wang J."/>
            <person name="Wong G.K.-S."/>
            <person name="Yang H."/>
        </authorList>
    </citation>
    <scope>NUCLEOTIDE SEQUENCE [LARGE SCALE GENOMIC DNA]</scope>
    <source>
        <strain>cv. 93-11</strain>
    </source>
</reference>
<reference key="2">
    <citation type="journal article" date="2014" name="Plant Physiol.">
        <title>Functional and evolutionary analysis of the CASPARIAN STRIP MEMBRANE DOMAIN PROTEIN family.</title>
        <authorList>
            <person name="Roppolo D."/>
            <person name="Boeckmann B."/>
            <person name="Pfister A."/>
            <person name="Boutet E."/>
            <person name="Rubio M.C."/>
            <person name="Denervaud-Tendon V."/>
            <person name="Vermeer J.E."/>
            <person name="Gheyselinck J."/>
            <person name="Xenarios I."/>
            <person name="Geldner N."/>
        </authorList>
    </citation>
    <scope>GENE FAMILY</scope>
    <scope>NOMENCLATURE</scope>
</reference>
<dbReference type="EMBL" id="CM000134">
    <property type="protein sequence ID" value="EEC84160.1"/>
    <property type="molecule type" value="Genomic_DNA"/>
</dbReference>
<dbReference type="STRING" id="39946.B8BD96"/>
<dbReference type="EnsemblPlants" id="BGIOSGA030356-TA">
    <property type="protein sequence ID" value="BGIOSGA030356-PA"/>
    <property type="gene ID" value="BGIOSGA030356"/>
</dbReference>
<dbReference type="EnsemblPlants" id="OsGoSa_09g0002280.01">
    <property type="protein sequence ID" value="OsGoSa_09g0002280.01"/>
    <property type="gene ID" value="OsGoSa_09g0002280"/>
</dbReference>
<dbReference type="EnsemblPlants" id="OsLiXu_09g0002140.01">
    <property type="protein sequence ID" value="OsLiXu_09g0002140.01"/>
    <property type="gene ID" value="OsLiXu_09g0002140"/>
</dbReference>
<dbReference type="EnsemblPlants" id="OsZS97_09G002250_01">
    <property type="protein sequence ID" value="OsZS97_09G002250_01"/>
    <property type="gene ID" value="OsZS97_09G002250"/>
</dbReference>
<dbReference type="Gramene" id="BGIOSGA030356-TA">
    <property type="protein sequence ID" value="BGIOSGA030356-PA"/>
    <property type="gene ID" value="BGIOSGA030356"/>
</dbReference>
<dbReference type="Gramene" id="OsGoSa_09g0002280.01">
    <property type="protein sequence ID" value="OsGoSa_09g0002280.01"/>
    <property type="gene ID" value="OsGoSa_09g0002280"/>
</dbReference>
<dbReference type="Gramene" id="OsLiXu_09g0002140.01">
    <property type="protein sequence ID" value="OsLiXu_09g0002140.01"/>
    <property type="gene ID" value="OsLiXu_09g0002140"/>
</dbReference>
<dbReference type="Gramene" id="OsZS97_09G002250_01">
    <property type="protein sequence ID" value="OsZS97_09G002250_01"/>
    <property type="gene ID" value="OsZS97_09G002250"/>
</dbReference>
<dbReference type="HOGENOM" id="CLU_103961_1_0_1"/>
<dbReference type="OMA" id="HTAFCYL"/>
<dbReference type="OrthoDB" id="754299at2759"/>
<dbReference type="Proteomes" id="UP000007015">
    <property type="component" value="Chromosome 9"/>
</dbReference>
<dbReference type="GO" id="GO:0005886">
    <property type="term" value="C:plasma membrane"/>
    <property type="evidence" value="ECO:0007669"/>
    <property type="project" value="UniProtKB-SubCell"/>
</dbReference>
<dbReference type="InterPro" id="IPR006702">
    <property type="entry name" value="CASP_dom"/>
</dbReference>
<dbReference type="InterPro" id="IPR045009">
    <property type="entry name" value="CASPL-5"/>
</dbReference>
<dbReference type="PANTHER" id="PTHR32021">
    <property type="entry name" value="CASP-LIKE PROTEIN 5B3"/>
    <property type="match status" value="1"/>
</dbReference>
<dbReference type="PANTHER" id="PTHR32021:SF51">
    <property type="entry name" value="CASP-LIKE PROTEIN 5B3"/>
    <property type="match status" value="1"/>
</dbReference>
<dbReference type="Pfam" id="PF04535">
    <property type="entry name" value="CASP_dom"/>
    <property type="match status" value="1"/>
</dbReference>
<evidence type="ECO:0000250" key="1"/>
<evidence type="ECO:0000255" key="2"/>
<evidence type="ECO:0000305" key="3"/>
<organism>
    <name type="scientific">Oryza sativa subsp. indica</name>
    <name type="common">Rice</name>
    <dbReference type="NCBI Taxonomy" id="39946"/>
    <lineage>
        <taxon>Eukaryota</taxon>
        <taxon>Viridiplantae</taxon>
        <taxon>Streptophyta</taxon>
        <taxon>Embryophyta</taxon>
        <taxon>Tracheophyta</taxon>
        <taxon>Spermatophyta</taxon>
        <taxon>Magnoliopsida</taxon>
        <taxon>Liliopsida</taxon>
        <taxon>Poales</taxon>
        <taxon>Poaceae</taxon>
        <taxon>BOP clade</taxon>
        <taxon>Oryzoideae</taxon>
        <taxon>Oryzeae</taxon>
        <taxon>Oryzinae</taxon>
        <taxon>Oryza</taxon>
        <taxon>Oryza sativa</taxon>
    </lineage>
</organism>
<protein>
    <recommendedName>
        <fullName>CASP-like protein 5B3</fullName>
        <shortName>OsCASPL5B3</shortName>
    </recommendedName>
</protein>
<proteinExistence type="inferred from homology"/>
<name>CSPLQ_ORYSI</name>
<feature type="chain" id="PRO_0000418688" description="CASP-like protein 5B3">
    <location>
        <begin position="1"/>
        <end position="154"/>
    </location>
</feature>
<feature type="topological domain" description="Cytoplasmic" evidence="2">
    <location>
        <begin position="1"/>
        <end position="17"/>
    </location>
</feature>
<feature type="transmembrane region" description="Helical" evidence="2">
    <location>
        <begin position="18"/>
        <end position="38"/>
    </location>
</feature>
<feature type="topological domain" description="Extracellular" evidence="2">
    <location>
        <begin position="39"/>
        <end position="42"/>
    </location>
</feature>
<feature type="transmembrane region" description="Helical" evidence="2">
    <location>
        <begin position="43"/>
        <end position="63"/>
    </location>
</feature>
<feature type="topological domain" description="Cytoplasmic" evidence="2">
    <location>
        <begin position="64"/>
        <end position="77"/>
    </location>
</feature>
<feature type="transmembrane region" description="Helical" evidence="2">
    <location>
        <begin position="78"/>
        <end position="98"/>
    </location>
</feature>
<feature type="topological domain" description="Extracellular" evidence="2">
    <location>
        <begin position="99"/>
        <end position="129"/>
    </location>
</feature>
<feature type="transmembrane region" description="Helical" evidence="2">
    <location>
        <begin position="130"/>
        <end position="150"/>
    </location>
</feature>
<feature type="topological domain" description="Cytoplasmic" evidence="2">
    <location>
        <begin position="151"/>
        <end position="154"/>
    </location>
</feature>
<feature type="glycosylation site" description="N-linked (GlcNAc...) asparagine" evidence="2">
    <location>
        <position position="39"/>
    </location>
</feature>
<accession>B8BD96</accession>
<keyword id="KW-1003">Cell membrane</keyword>
<keyword id="KW-0325">Glycoprotein</keyword>
<keyword id="KW-0472">Membrane</keyword>
<keyword id="KW-1185">Reference proteome</keyword>
<keyword id="KW-0812">Transmembrane</keyword>
<keyword id="KW-1133">Transmembrane helix</keyword>